<feature type="signal peptide">
    <location>
        <begin position="1"/>
        <end position="20"/>
    </location>
</feature>
<feature type="propeptide" id="PRO_0000033702" evidence="1">
    <location>
        <begin position="21"/>
        <end position="309"/>
    </location>
</feature>
<feature type="chain" id="PRO_0000033703" description="Inhibin beta A chain">
    <location>
        <begin position="310"/>
        <end position="425"/>
    </location>
</feature>
<feature type="region of interest" description="Disordered" evidence="4">
    <location>
        <begin position="259"/>
        <end position="289"/>
    </location>
</feature>
<feature type="compositionally biased region" description="Basic and acidic residues" evidence="4">
    <location>
        <begin position="263"/>
        <end position="275"/>
    </location>
</feature>
<feature type="glycosylation site" description="N-linked (GlcNAc...) asparagine" evidence="3">
    <location>
        <position position="165"/>
    </location>
</feature>
<feature type="disulfide bond" evidence="1">
    <location>
        <begin position="313"/>
        <end position="321"/>
    </location>
</feature>
<feature type="disulfide bond" evidence="1">
    <location>
        <begin position="320"/>
        <end position="390"/>
    </location>
</feature>
<feature type="disulfide bond" evidence="1">
    <location>
        <begin position="349"/>
        <end position="422"/>
    </location>
</feature>
<feature type="disulfide bond" evidence="1">
    <location>
        <begin position="353"/>
        <end position="424"/>
    </location>
</feature>
<feature type="disulfide bond" description="Interchain" evidence="1">
    <location>
        <position position="389"/>
    </location>
</feature>
<evidence type="ECO:0000250" key="1"/>
<evidence type="ECO:0000250" key="2">
    <source>
        <dbReference type="UniProtKB" id="P08476"/>
    </source>
</evidence>
<evidence type="ECO:0000255" key="3"/>
<evidence type="ECO:0000256" key="4">
    <source>
        <dbReference type="SAM" id="MobiDB-lite"/>
    </source>
</evidence>
<evidence type="ECO:0000305" key="5"/>
<keyword id="KW-0165">Cleavage on pair of basic residues</keyword>
<keyword id="KW-0903">Direct protein sequencing</keyword>
<keyword id="KW-1015">Disulfide bond</keyword>
<keyword id="KW-0325">Glycoprotein</keyword>
<keyword id="KW-0339">Growth factor</keyword>
<keyword id="KW-0372">Hormone</keyword>
<keyword id="KW-1185">Reference proteome</keyword>
<keyword id="KW-0964">Secreted</keyword>
<keyword id="KW-0732">Signal</keyword>
<accession>P07995</accession>
<accession>A0JN81</accession>
<name>INHBA_BOVIN</name>
<proteinExistence type="evidence at protein level"/>
<comment type="function">
    <text evidence="2">Inhibins/activins are involved in regulating a number of diverse functions such as hypothalamic and pituitary hormone secretion, gonadal hormone secretion, germ cell development and maturation, erythroid differentiation, insulin secretion, nerve cell survival, embryonic axial development or bone growth, depending on their subunit composition.</text>
</comment>
<comment type="function">
    <text evidence="2">Activin A is a homodimer of INHBA that plays a role in several essential biological processes including embryonic development, stem cell maintenance and differentiation, haematopoiesis, cell proliferation and tissue fibrosis. Signals through type I (such as ACVR1B or ACVR1C) and type II receptors (such as ACVR2A, ACVR2B or BMPR2) which, upon ligand binding, phosphorylate SMAD2 and SMAD3 intracellular signaling mediators that form a complex with SMAD4, translocate to the nucleus and modulate gene expression. Can also activate alternative non-canonical intracellular signaling pathways including the p38 MAPK, extracellular signal-regulated kinases 1/2 (ERK1/2) and c-Jun N-terminal kinases (JNKs) to modulate cell migration and differentiation. Alternatively, promotes osteoblastic differentiation via ACVRL1-SMAD1/5/9 pathway. In addition, can engage the type I receptor ACVR1 to form an ACVR1-activin A-type II receptor non-signaling complex (NSC) that renders receptors unavailable for engagement with BMPs, hence resulting in an apparent inhibition of ACVR1-mediated BMP signaling.</text>
</comment>
<comment type="function">
    <text evidence="2">Inhibin A is a dimer of alpha/INHA and beta-A/INHBA that functions as a feedback regulator in the hypothalamic-pituitary-gonadal (HPG) axis. Inhibits the secretion of FSH from the anterior pituitary gland by acting on pituitary gonadotrope cells. Antagonizes activin A by binding to the proteoglycan, betaglycan, and forming a stable complex with and, thereby, sequestering type II activin receptors while excluding type I receptor.</text>
</comment>
<comment type="subunit">
    <text evidence="2">Dimeric, linked by one or more disulfide bonds. Inhibin A is a dimer of alpha/INHA and beta-A/INHBA. Activin A is a homodimer of beta-A/INHBA. Activin AB is a dimer of beta-A/INHBA and beta-B/INHBB. Interacts with FST and FSTL3; these interactions prevent activin A interaction to its type II receptor. Activin A interacts with ACVR2A. Activin A interacts with BMPR2. Inhibin A interacts with ACVR1; this interaction creates a non-signaling complex (NSC) that inhibits ACVR1-mediated BMP signaling. Inhibin A interacts with ACVR2A.</text>
</comment>
<comment type="subcellular location">
    <subcellularLocation>
        <location evidence="2">Secreted</location>
    </subcellularLocation>
</comment>
<comment type="similarity">
    <text evidence="5">Belongs to the TGF-beta family.</text>
</comment>
<protein>
    <recommendedName>
        <fullName>Inhibin beta A chain</fullName>
    </recommendedName>
    <alternativeName>
        <fullName>Activin beta-A chain</fullName>
    </alternativeName>
</protein>
<dbReference type="EMBL" id="U16239">
    <property type="protein sequence ID" value="AAB60627.1"/>
    <property type="molecule type" value="Genomic_DNA"/>
</dbReference>
<dbReference type="EMBL" id="U16238">
    <property type="protein sequence ID" value="AAB60627.1"/>
    <property type="status" value="JOINED"/>
    <property type="molecule type" value="Genomic_DNA"/>
</dbReference>
<dbReference type="EMBL" id="BC126556">
    <property type="protein sequence ID" value="AAI26557.1"/>
    <property type="molecule type" value="mRNA"/>
</dbReference>
<dbReference type="EMBL" id="M13274">
    <property type="protein sequence ID" value="AAA97415.1"/>
    <property type="molecule type" value="mRNA"/>
</dbReference>
<dbReference type="PIR" id="S50898">
    <property type="entry name" value="S50898"/>
</dbReference>
<dbReference type="RefSeq" id="NP_776788.1">
    <property type="nucleotide sequence ID" value="NM_174363.2"/>
</dbReference>
<dbReference type="RefSeq" id="XP_005205677.1">
    <property type="nucleotide sequence ID" value="XM_005205620.5"/>
</dbReference>
<dbReference type="RefSeq" id="XP_024846234.1">
    <property type="nucleotide sequence ID" value="XM_024990466.2"/>
</dbReference>
<dbReference type="SMR" id="P07995"/>
<dbReference type="FunCoup" id="P07995">
    <property type="interactions" value="206"/>
</dbReference>
<dbReference type="STRING" id="9913.ENSBTAP00000056958"/>
<dbReference type="GlyCosmos" id="P07995">
    <property type="glycosylation" value="1 site, No reported glycans"/>
</dbReference>
<dbReference type="GlyGen" id="P07995">
    <property type="glycosylation" value="1 site"/>
</dbReference>
<dbReference type="PaxDb" id="9913-ENSBTAP00000003783"/>
<dbReference type="Ensembl" id="ENSBTAT00000090450.1">
    <property type="protein sequence ID" value="ENSBTAP00000098317.1"/>
    <property type="gene ID" value="ENSBTAG00000056438.1"/>
</dbReference>
<dbReference type="GeneID" id="281867"/>
<dbReference type="KEGG" id="bta:281867"/>
<dbReference type="CTD" id="3624"/>
<dbReference type="VEuPathDB" id="HostDB:ENSBTAG00000048508"/>
<dbReference type="eggNOG" id="KOG3900">
    <property type="taxonomic scope" value="Eukaryota"/>
</dbReference>
<dbReference type="GeneTree" id="ENSGT00940000157116"/>
<dbReference type="HOGENOM" id="CLU_020515_5_1_1"/>
<dbReference type="InParanoid" id="P07995"/>
<dbReference type="OMA" id="CCKKHFY"/>
<dbReference type="OrthoDB" id="6516235at2759"/>
<dbReference type="TreeFam" id="TF351791"/>
<dbReference type="Reactome" id="R-BTA-1502540">
    <property type="pathway name" value="Signaling by Activin"/>
</dbReference>
<dbReference type="Reactome" id="R-BTA-201451">
    <property type="pathway name" value="Signaling by BMP"/>
</dbReference>
<dbReference type="Reactome" id="R-BTA-209822">
    <property type="pathway name" value="Glycoprotein hormones"/>
</dbReference>
<dbReference type="Reactome" id="R-BTA-2473224">
    <property type="pathway name" value="Antagonism of Activin by Follistatin"/>
</dbReference>
<dbReference type="Reactome" id="R-BTA-9839406">
    <property type="pathway name" value="TGFBR3 regulates activin signaling"/>
</dbReference>
<dbReference type="Proteomes" id="UP000009136">
    <property type="component" value="Chromosome 4"/>
</dbReference>
<dbReference type="Bgee" id="ENSBTAG00000048508">
    <property type="expression patterns" value="Expressed in granulosa cell and 94 other cell types or tissues"/>
</dbReference>
<dbReference type="GO" id="GO:0043509">
    <property type="term" value="C:activin A complex"/>
    <property type="evidence" value="ECO:0000250"/>
    <property type="project" value="UniProtKB"/>
</dbReference>
<dbReference type="GO" id="GO:0150005">
    <property type="term" value="C:enzyme activator complex"/>
    <property type="evidence" value="ECO:0007669"/>
    <property type="project" value="Ensembl"/>
</dbReference>
<dbReference type="GO" id="GO:0005576">
    <property type="term" value="C:extracellular region"/>
    <property type="evidence" value="ECO:0000250"/>
    <property type="project" value="UniProtKB"/>
</dbReference>
<dbReference type="GO" id="GO:0005615">
    <property type="term" value="C:extracellular space"/>
    <property type="evidence" value="ECO:0000318"/>
    <property type="project" value="GO_Central"/>
</dbReference>
<dbReference type="GO" id="GO:0043512">
    <property type="term" value="C:inhibin A complex"/>
    <property type="evidence" value="ECO:0000250"/>
    <property type="project" value="UniProtKB"/>
</dbReference>
<dbReference type="GO" id="GO:0048471">
    <property type="term" value="C:perinuclear region of cytoplasm"/>
    <property type="evidence" value="ECO:0007669"/>
    <property type="project" value="Ensembl"/>
</dbReference>
<dbReference type="GO" id="GO:0005125">
    <property type="term" value="F:cytokine activity"/>
    <property type="evidence" value="ECO:0000250"/>
    <property type="project" value="UniProtKB"/>
</dbReference>
<dbReference type="GO" id="GO:0008083">
    <property type="term" value="F:growth factor activity"/>
    <property type="evidence" value="ECO:0007669"/>
    <property type="project" value="UniProtKB-KW"/>
</dbReference>
<dbReference type="GO" id="GO:0005179">
    <property type="term" value="F:hormone activity"/>
    <property type="evidence" value="ECO:0007669"/>
    <property type="project" value="UniProtKB-KW"/>
</dbReference>
<dbReference type="GO" id="GO:0042802">
    <property type="term" value="F:identical protein binding"/>
    <property type="evidence" value="ECO:0000250"/>
    <property type="project" value="AgBase"/>
</dbReference>
<dbReference type="GO" id="GO:0017046">
    <property type="term" value="F:peptide hormone binding"/>
    <property type="evidence" value="ECO:0000250"/>
    <property type="project" value="AgBase"/>
</dbReference>
<dbReference type="GO" id="GO:0070699">
    <property type="term" value="F:type II activin receptor binding"/>
    <property type="evidence" value="ECO:0007669"/>
    <property type="project" value="Ensembl"/>
</dbReference>
<dbReference type="GO" id="GO:0032924">
    <property type="term" value="P:activin receptor signaling pathway"/>
    <property type="evidence" value="ECO:0000250"/>
    <property type="project" value="UniProtKB"/>
</dbReference>
<dbReference type="GO" id="GO:0008209">
    <property type="term" value="P:androgen metabolic process"/>
    <property type="evidence" value="ECO:0007669"/>
    <property type="project" value="Ensembl"/>
</dbReference>
<dbReference type="GO" id="GO:1903449">
    <property type="term" value="P:androst-4-ene-3,17-dione biosynthetic process"/>
    <property type="evidence" value="ECO:0007669"/>
    <property type="project" value="Ensembl"/>
</dbReference>
<dbReference type="GO" id="GO:0035987">
    <property type="term" value="P:endodermal cell differentiation"/>
    <property type="evidence" value="ECO:0007669"/>
    <property type="project" value="Ensembl"/>
</dbReference>
<dbReference type="GO" id="GO:0097191">
    <property type="term" value="P:extrinsic apoptotic signaling pathway"/>
    <property type="evidence" value="ECO:0007669"/>
    <property type="project" value="Ensembl"/>
</dbReference>
<dbReference type="GO" id="GO:0061029">
    <property type="term" value="P:eyelid development in camera-type eye"/>
    <property type="evidence" value="ECO:0000250"/>
    <property type="project" value="UniProtKB"/>
</dbReference>
<dbReference type="GO" id="GO:0001942">
    <property type="term" value="P:hair follicle development"/>
    <property type="evidence" value="ECO:0000250"/>
    <property type="project" value="UniProtKB"/>
</dbReference>
<dbReference type="GO" id="GO:0002244">
    <property type="term" value="P:hematopoietic progenitor cell differentiation"/>
    <property type="evidence" value="ECO:0000250"/>
    <property type="project" value="UniProtKB"/>
</dbReference>
<dbReference type="GO" id="GO:0042541">
    <property type="term" value="P:hemoglobin biosynthetic process"/>
    <property type="evidence" value="ECO:0000250"/>
    <property type="project" value="UniProtKB"/>
</dbReference>
<dbReference type="GO" id="GO:0008584">
    <property type="term" value="P:male gonad development"/>
    <property type="evidence" value="ECO:0000250"/>
    <property type="project" value="UniProtKB"/>
</dbReference>
<dbReference type="GO" id="GO:0048333">
    <property type="term" value="P:mesodermal cell differentiation"/>
    <property type="evidence" value="ECO:0007669"/>
    <property type="project" value="Ensembl"/>
</dbReference>
<dbReference type="GO" id="GO:0030308">
    <property type="term" value="P:negative regulation of cell growth"/>
    <property type="evidence" value="ECO:0000250"/>
    <property type="project" value="UniProtKB"/>
</dbReference>
<dbReference type="GO" id="GO:0008285">
    <property type="term" value="P:negative regulation of cell population proliferation"/>
    <property type="evidence" value="ECO:0000250"/>
    <property type="project" value="UniProtKB"/>
</dbReference>
<dbReference type="GO" id="GO:2000134">
    <property type="term" value="P:negative regulation of G1/S transition of mitotic cell cycle"/>
    <property type="evidence" value="ECO:0000250"/>
    <property type="project" value="UniProtKB"/>
</dbReference>
<dbReference type="GO" id="GO:0051799">
    <property type="term" value="P:negative regulation of hair follicle development"/>
    <property type="evidence" value="ECO:0007669"/>
    <property type="project" value="Ensembl"/>
</dbReference>
<dbReference type="GO" id="GO:0042476">
    <property type="term" value="P:odontogenesis"/>
    <property type="evidence" value="ECO:0000250"/>
    <property type="project" value="UniProtKB"/>
</dbReference>
<dbReference type="GO" id="GO:0001541">
    <property type="term" value="P:ovarian follicle development"/>
    <property type="evidence" value="ECO:0000250"/>
    <property type="project" value="UniProtKB"/>
</dbReference>
<dbReference type="GO" id="GO:0045893">
    <property type="term" value="P:positive regulation of DNA-templated transcription"/>
    <property type="evidence" value="ECO:0000250"/>
    <property type="project" value="UniProtKB"/>
</dbReference>
<dbReference type="GO" id="GO:0045648">
    <property type="term" value="P:positive regulation of erythrocyte differentiation"/>
    <property type="evidence" value="ECO:0000250"/>
    <property type="project" value="UniProtKB"/>
</dbReference>
<dbReference type="GO" id="GO:2001241">
    <property type="term" value="P:positive regulation of extrinsic apoptotic signaling pathway in absence of ligand"/>
    <property type="evidence" value="ECO:0000250"/>
    <property type="project" value="UniProtKB"/>
</dbReference>
<dbReference type="GO" id="GO:0010628">
    <property type="term" value="P:positive regulation of gene expression"/>
    <property type="evidence" value="ECO:0007669"/>
    <property type="project" value="Ensembl"/>
</dbReference>
<dbReference type="GO" id="GO:0060279">
    <property type="term" value="P:positive regulation of ovulation"/>
    <property type="evidence" value="ECO:0000250"/>
    <property type="project" value="UniProtKB"/>
</dbReference>
<dbReference type="GO" id="GO:0051247">
    <property type="term" value="P:positive regulation of protein metabolic process"/>
    <property type="evidence" value="ECO:0007669"/>
    <property type="project" value="Ensembl"/>
</dbReference>
<dbReference type="GO" id="GO:0060391">
    <property type="term" value="P:positive regulation of SMAD protein signal transduction"/>
    <property type="evidence" value="ECO:0007669"/>
    <property type="project" value="Ensembl"/>
</dbReference>
<dbReference type="GO" id="GO:0045944">
    <property type="term" value="P:positive regulation of transcription by RNA polymerase II"/>
    <property type="evidence" value="ECO:0000250"/>
    <property type="project" value="UniProtKB"/>
</dbReference>
<dbReference type="GO" id="GO:0042701">
    <property type="term" value="P:progesterone secretion"/>
    <property type="evidence" value="ECO:0000250"/>
    <property type="project" value="UniProtKB"/>
</dbReference>
<dbReference type="GO" id="GO:0046880">
    <property type="term" value="P:regulation of follicle-stimulating hormone secretion"/>
    <property type="evidence" value="ECO:0000250"/>
    <property type="project" value="UniProtKB"/>
</dbReference>
<dbReference type="GO" id="GO:0006357">
    <property type="term" value="P:regulation of transcription by RNA polymerase II"/>
    <property type="evidence" value="ECO:0000250"/>
    <property type="project" value="UniProtKB"/>
</dbReference>
<dbReference type="GO" id="GO:0060021">
    <property type="term" value="P:roof of mouth development"/>
    <property type="evidence" value="ECO:0000250"/>
    <property type="project" value="UniProtKB"/>
</dbReference>
<dbReference type="GO" id="GO:0060008">
    <property type="term" value="P:Sertoli cell differentiation"/>
    <property type="evidence" value="ECO:0007669"/>
    <property type="project" value="Ensembl"/>
</dbReference>
<dbReference type="GO" id="GO:0021773">
    <property type="term" value="P:striatal medium spiny neuron differentiation"/>
    <property type="evidence" value="ECO:0007669"/>
    <property type="project" value="Ensembl"/>
</dbReference>
<dbReference type="GO" id="GO:0061370">
    <property type="term" value="P:testosterone biosynthetic process"/>
    <property type="evidence" value="ECO:0007669"/>
    <property type="project" value="Ensembl"/>
</dbReference>
<dbReference type="GO" id="GO:0006366">
    <property type="term" value="P:transcription by RNA polymerase II"/>
    <property type="evidence" value="ECO:0007669"/>
    <property type="project" value="Ensembl"/>
</dbReference>
<dbReference type="CDD" id="cd19404">
    <property type="entry name" value="TGF_beta_INHBA"/>
    <property type="match status" value="1"/>
</dbReference>
<dbReference type="FunFam" id="2.10.90.10:FF:000005">
    <property type="entry name" value="Inhibin beta A chain"/>
    <property type="match status" value="1"/>
</dbReference>
<dbReference type="FunFam" id="2.60.120.970:FF:000007">
    <property type="entry name" value="Inhibin beta A chain"/>
    <property type="match status" value="1"/>
</dbReference>
<dbReference type="Gene3D" id="2.60.120.970">
    <property type="match status" value="1"/>
</dbReference>
<dbReference type="Gene3D" id="2.10.90.10">
    <property type="entry name" value="Cystine-knot cytokines"/>
    <property type="match status" value="1"/>
</dbReference>
<dbReference type="InterPro" id="IPR029034">
    <property type="entry name" value="Cystine-knot_cytokine"/>
</dbReference>
<dbReference type="InterPro" id="IPR000491">
    <property type="entry name" value="Inhibin_betaA"/>
</dbReference>
<dbReference type="InterPro" id="IPR001839">
    <property type="entry name" value="TGF-b_C"/>
</dbReference>
<dbReference type="InterPro" id="IPR001111">
    <property type="entry name" value="TGF-b_propeptide"/>
</dbReference>
<dbReference type="InterPro" id="IPR015615">
    <property type="entry name" value="TGF-beta-rel"/>
</dbReference>
<dbReference type="InterPro" id="IPR017948">
    <property type="entry name" value="TGFb_CS"/>
</dbReference>
<dbReference type="PANTHER" id="PTHR11848:SF133">
    <property type="entry name" value="INHIBIN BETA A CHAIN"/>
    <property type="match status" value="1"/>
</dbReference>
<dbReference type="PANTHER" id="PTHR11848">
    <property type="entry name" value="TGF-BETA FAMILY"/>
    <property type="match status" value="1"/>
</dbReference>
<dbReference type="Pfam" id="PF00019">
    <property type="entry name" value="TGF_beta"/>
    <property type="match status" value="1"/>
</dbReference>
<dbReference type="Pfam" id="PF00688">
    <property type="entry name" value="TGFb_propeptide"/>
    <property type="match status" value="1"/>
</dbReference>
<dbReference type="PRINTS" id="PR00670">
    <property type="entry name" value="INHIBINBA"/>
</dbReference>
<dbReference type="SMART" id="SM00204">
    <property type="entry name" value="TGFB"/>
    <property type="match status" value="1"/>
</dbReference>
<dbReference type="SUPFAM" id="SSF57501">
    <property type="entry name" value="Cystine-knot cytokines"/>
    <property type="match status" value="1"/>
</dbReference>
<dbReference type="PROSITE" id="PS00250">
    <property type="entry name" value="TGF_BETA_1"/>
    <property type="match status" value="1"/>
</dbReference>
<dbReference type="PROSITE" id="PS51362">
    <property type="entry name" value="TGF_BETA_2"/>
    <property type="match status" value="1"/>
</dbReference>
<gene>
    <name type="primary">INHBA</name>
</gene>
<organism>
    <name type="scientific">Bos taurus</name>
    <name type="common">Bovine</name>
    <dbReference type="NCBI Taxonomy" id="9913"/>
    <lineage>
        <taxon>Eukaryota</taxon>
        <taxon>Metazoa</taxon>
        <taxon>Chordata</taxon>
        <taxon>Craniata</taxon>
        <taxon>Vertebrata</taxon>
        <taxon>Euteleostomi</taxon>
        <taxon>Mammalia</taxon>
        <taxon>Eutheria</taxon>
        <taxon>Laurasiatheria</taxon>
        <taxon>Artiodactyla</taxon>
        <taxon>Ruminantia</taxon>
        <taxon>Pecora</taxon>
        <taxon>Bovidae</taxon>
        <taxon>Bovinae</taxon>
        <taxon>Bos</taxon>
    </lineage>
</organism>
<sequence>MPLLWLRGFLLASCWIIVRSSPTPGSEGHSAAPDCPSCALATLPKDVPNSQPEMVEAVKKHILNMLHLKKRPDVTQPVPKAALLNAIRKLHVGKVGENGYVEIEDDIGRRAEMNELMEQTSEIITFAESGTARKTLHFEISKEGSDLSVVERAEIWLFLKVPKANRTRSKVTIRLFQQQKHLQGSLDAGEEAEEVGLKGEKSEMLISEKVVDARKSTWHIFPVSSCIQRLLDQGKSSLDIRIACEQCQETGASLVLLGKKKKKEEEGEGKKRDGEGGAGGDEEKEQSHRPFLMLQARQSEDHPHRRRRRGLECDGKVNICCKKQFFVSFKDIGWNDWIIAPSGYHANYCEGECPSHIAGTSGSSLSFHSTVINHYRMRGHSPFANLKSCCVPTKLRPMSMLYYDDGQNIIKKDIQNMIVEECGCS</sequence>
<reference key="1">
    <citation type="journal article" date="1994" name="Eur. J. Biochem.">
        <title>Genomic cloning and sequence analyses of the bovine alpha-, beta A- and beta B-inhibin/activin genes. Identification of transcription factor AP-2-binding sites in the 5'-flanking regions by DNase I footprinting.</title>
        <authorList>
            <person name="Thompson D.A."/>
            <person name="Cronin C.N."/>
            <person name="Martin F."/>
        </authorList>
    </citation>
    <scope>NUCLEOTIDE SEQUENCE [GENOMIC DNA]</scope>
    <source>
        <tissue>Liver</tissue>
    </source>
</reference>
<reference key="2">
    <citation type="submission" date="2006-10" db="EMBL/GenBank/DDBJ databases">
        <authorList>
            <consortium name="NIH - Mammalian Gene Collection (MGC) project"/>
        </authorList>
    </citation>
    <scope>NUCLEOTIDE SEQUENCE [LARGE SCALE MRNA]</scope>
    <source>
        <strain>Hereford</strain>
        <tissue>Fetal brain</tissue>
    </source>
</reference>
<reference key="3">
    <citation type="journal article" date="1986" name="Proc. Natl. Acad. Sci. U.S.A.">
        <title>Cloning and sequence analysis of cDNA species coding for the two subunits of inhibin from bovine follicular fluid.</title>
        <authorList>
            <person name="Forage R.G."/>
            <person name="Ring J.M."/>
            <person name="Brown R.W."/>
            <person name="McInerney B.V."/>
            <person name="Cobon G.S."/>
            <person name="Gregson R.P."/>
            <person name="Robertson D.M."/>
            <person name="Morgan F.J."/>
            <person name="Hearn M.T.W."/>
            <person name="Findlay J.K."/>
            <person name="Wettenhall R.E.H."/>
            <person name="Burger H.G."/>
            <person name="de Kretser D.M."/>
        </authorList>
    </citation>
    <scope>NUCLEOTIDE SEQUENCE [MRNA] OF 258-425</scope>
    <source>
        <tissue>Ovarian follicular fluid</tissue>
    </source>
</reference>
<reference key="4">
    <citation type="journal article" date="1992" name="Endocrinology">
        <title>Purification and characterization of high molecular weight forms of inhibin from bovine follicular fluid.</title>
        <authorList>
            <person name="Sugino K."/>
            <person name="Nakamura T."/>
            <person name="Takio K."/>
            <person name="Miyamoto K."/>
            <person name="Hasegawa Y."/>
            <person name="Igarashi M."/>
            <person name="Titani K."/>
            <person name="Sugino H."/>
        </authorList>
    </citation>
    <scope>PARTIAL PROTEIN SEQUENCE</scope>
</reference>